<reference key="1">
    <citation type="journal article" date="1999" name="Genes Cells">
        <title>Fission yeast APC/cyclosome subunits, Cut20/Apc4 and Cut23/Apc8, in regulating metaphase-anaphase progression and cellular stress responses.</title>
        <authorList>
            <person name="Yamashita Y.M."/>
            <person name="Nakaseko Y."/>
            <person name="Kumada K."/>
            <person name="Nakagawa T."/>
            <person name="Yanagida M."/>
        </authorList>
    </citation>
    <scope>NUCLEOTIDE SEQUENCE [GENOMIC DNA]</scope>
    <scope>FUNCTION</scope>
    <scope>INTERACTION WITH APC1</scope>
    <source>
        <strain>972 / ATCC 24843</strain>
    </source>
</reference>
<reference key="2">
    <citation type="journal article" date="2002" name="Nature">
        <title>The genome sequence of Schizosaccharomyces pombe.</title>
        <authorList>
            <person name="Wood V."/>
            <person name="Gwilliam R."/>
            <person name="Rajandream M.A."/>
            <person name="Lyne M.H."/>
            <person name="Lyne R."/>
            <person name="Stewart A."/>
            <person name="Sgouros J.G."/>
            <person name="Peat N."/>
            <person name="Hayles J."/>
            <person name="Baker S.G."/>
            <person name="Basham D."/>
            <person name="Bowman S."/>
            <person name="Brooks K."/>
            <person name="Brown D."/>
            <person name="Brown S."/>
            <person name="Chillingworth T."/>
            <person name="Churcher C.M."/>
            <person name="Collins M."/>
            <person name="Connor R."/>
            <person name="Cronin A."/>
            <person name="Davis P."/>
            <person name="Feltwell T."/>
            <person name="Fraser A."/>
            <person name="Gentles S."/>
            <person name="Goble A."/>
            <person name="Hamlin N."/>
            <person name="Harris D.E."/>
            <person name="Hidalgo J."/>
            <person name="Hodgson G."/>
            <person name="Holroyd S."/>
            <person name="Hornsby T."/>
            <person name="Howarth S."/>
            <person name="Huckle E.J."/>
            <person name="Hunt S."/>
            <person name="Jagels K."/>
            <person name="James K.D."/>
            <person name="Jones L."/>
            <person name="Jones M."/>
            <person name="Leather S."/>
            <person name="McDonald S."/>
            <person name="McLean J."/>
            <person name="Mooney P."/>
            <person name="Moule S."/>
            <person name="Mungall K.L."/>
            <person name="Murphy L.D."/>
            <person name="Niblett D."/>
            <person name="Odell C."/>
            <person name="Oliver K."/>
            <person name="O'Neil S."/>
            <person name="Pearson D."/>
            <person name="Quail M.A."/>
            <person name="Rabbinowitsch E."/>
            <person name="Rutherford K.M."/>
            <person name="Rutter S."/>
            <person name="Saunders D."/>
            <person name="Seeger K."/>
            <person name="Sharp S."/>
            <person name="Skelton J."/>
            <person name="Simmonds M.N."/>
            <person name="Squares R."/>
            <person name="Squares S."/>
            <person name="Stevens K."/>
            <person name="Taylor K."/>
            <person name="Taylor R.G."/>
            <person name="Tivey A."/>
            <person name="Walsh S.V."/>
            <person name="Warren T."/>
            <person name="Whitehead S."/>
            <person name="Woodward J.R."/>
            <person name="Volckaert G."/>
            <person name="Aert R."/>
            <person name="Robben J."/>
            <person name="Grymonprez B."/>
            <person name="Weltjens I."/>
            <person name="Vanstreels E."/>
            <person name="Rieger M."/>
            <person name="Schaefer M."/>
            <person name="Mueller-Auer S."/>
            <person name="Gabel C."/>
            <person name="Fuchs M."/>
            <person name="Duesterhoeft A."/>
            <person name="Fritzc C."/>
            <person name="Holzer E."/>
            <person name="Moestl D."/>
            <person name="Hilbert H."/>
            <person name="Borzym K."/>
            <person name="Langer I."/>
            <person name="Beck A."/>
            <person name="Lehrach H."/>
            <person name="Reinhardt R."/>
            <person name="Pohl T.M."/>
            <person name="Eger P."/>
            <person name="Zimmermann W."/>
            <person name="Wedler H."/>
            <person name="Wambutt R."/>
            <person name="Purnelle B."/>
            <person name="Goffeau A."/>
            <person name="Cadieu E."/>
            <person name="Dreano S."/>
            <person name="Gloux S."/>
            <person name="Lelaure V."/>
            <person name="Mottier S."/>
            <person name="Galibert F."/>
            <person name="Aves S.J."/>
            <person name="Xiang Z."/>
            <person name="Hunt C."/>
            <person name="Moore K."/>
            <person name="Hurst S.M."/>
            <person name="Lucas M."/>
            <person name="Rochet M."/>
            <person name="Gaillardin C."/>
            <person name="Tallada V.A."/>
            <person name="Garzon A."/>
            <person name="Thode G."/>
            <person name="Daga R.R."/>
            <person name="Cruzado L."/>
            <person name="Jimenez J."/>
            <person name="Sanchez M."/>
            <person name="del Rey F."/>
            <person name="Benito J."/>
            <person name="Dominguez A."/>
            <person name="Revuelta J.L."/>
            <person name="Moreno S."/>
            <person name="Armstrong J."/>
            <person name="Forsburg S.L."/>
            <person name="Cerutti L."/>
            <person name="Lowe T."/>
            <person name="McCombie W.R."/>
            <person name="Paulsen I."/>
            <person name="Potashkin J."/>
            <person name="Shpakovski G.V."/>
            <person name="Ussery D."/>
            <person name="Barrell B.G."/>
            <person name="Nurse P."/>
        </authorList>
    </citation>
    <scope>NUCLEOTIDE SEQUENCE [LARGE SCALE GENOMIC DNA]</scope>
    <source>
        <strain>972 / ATCC 24843</strain>
    </source>
</reference>
<reference key="3">
    <citation type="journal article" date="1999" name="Mol. Cell. Biol.">
        <title>The Schizosaccharomyces pombe dim1(+) gene interacts with the anaphase-promoting complex or cyclosome (APC/C) component lid1(+) and is required for APC/C function.</title>
        <authorList>
            <person name="Berry L.D."/>
            <person name="Feoktistova A."/>
            <person name="Wright M.D."/>
            <person name="Gould K.L."/>
        </authorList>
    </citation>
    <scope>INTERACTION WITH DIM1</scope>
</reference>
<reference key="4">
    <citation type="journal article" date="2002" name="Curr. Biol.">
        <title>Proteomics analysis identifies new components of the fission and budding yeast anaphase-promoting complexes.</title>
        <authorList>
            <person name="Yoon H.-J."/>
            <person name="Feoktistova A."/>
            <person name="Wolfe B.A."/>
            <person name="Jennings J.L."/>
            <person name="Link A.J."/>
            <person name="Gould K.L."/>
        </authorList>
    </citation>
    <scope>SUBUNIT</scope>
</reference>
<comment type="function">
    <text evidence="2">Component of the anaphase-promoting complex/cyclosome (APC/C), a cell cycle-regulated E3 ubiquitin-protein ligase complex that controls progression through mitosis and the G1 phase of the cell cycle. The APC/C is thought to confer substrate specificity and, in the presence of ubiquitin-conjugating E2 enzymes, it catalyzes the formation of protein-ubiquitin conjugates that are subsequently degraded by the 26S proteasome. Has a role in promoting metaphase to anaphase transition via the ubiquitination of specific mitotic substrates.</text>
</comment>
<comment type="subunit">
    <text evidence="1 2 3">The APC/C is composed of at least 13 subunits: apc1, apc2, nuc2, apc4, apc5, cut9, apc8, apc10, apc11, hcn1, apc13, apc14 and apc15. Interacts with apc1 and dim1.</text>
</comment>
<comment type="interaction">
    <interactant intactId="EBI-1251472">
        <id>O42839</id>
    </interactant>
    <interactant intactId="EBI-1251583">
        <id>O74358</id>
        <label>apc13</label>
    </interactant>
    <organismsDiffer>false</organismsDiffer>
    <experiments>4</experiments>
</comment>
<feature type="chain" id="PRO_0000050949" description="Anaphase-promoting complex subunit 4">
    <location>
        <begin position="1"/>
        <end position="719"/>
    </location>
</feature>
<feature type="repeat" description="WD">
    <location>
        <begin position="57"/>
        <end position="96"/>
    </location>
</feature>
<sequence length="719" mass="82605">MVSKSFKYPKKHKFEWINETNRVERVGSGLKRVILCPSMELIAILTCSNHLICCRSNSQRIWDVDFHDLEATELCWNHDGNLIVVGFKNGELKIIDSSTGHLVEQRPASRDLAVLMITWAMQETIVNEKRNDFLFDATAYMPLLGTLPSSAKEERIFSSKAIAQFFEPRKREGENNKKVELLSILDERGIRYINMFSSYKIGESDSLKSALNLGVPISHSITNDLAYHVLICKGGTNISLKTLYMPLLKNDLGSIVDIATMSTRMQHLVRYLEEVLNAMYEEFDNVFKSEASFIKTFDALVSKYSDTTFFSLQLELYQFIMNGIPSDLLKEWINERVGDRVLKNWERAMVNSYTSLIIFCQEFVIPACERLTVLLSSARGKSIWGHMKGNTLLDAKLVEDCLATLGYLQNNVFSFLNCLFEEKKYMKHFISWLNYAIVEFNTSEPSSIPPQEIIEHINETVIYIRHSLFRSKLTSYFMGTKPLQLRDPDYYSLKDFANQDDSNSVDDFVSFKTLKESLRDSFNVIFSYPSLTCQKQWLKTGDLVLFEGTDWNVSSLIPKSCNEKNQLFSLFFRKDTPNIFLIISQLMENTMLPVSGCHFGLDYAELLGSSLLDFQPATVLDMKLLNGSSILILGKLKEKCFLCEICLADVPLTFFEHQQKNSYLDAISHLPFIPLNSCLWLHEFEKDFLPSTLEYALSENSDYGVLISRESSRYRLFSF</sequence>
<keyword id="KW-0131">Cell cycle</keyword>
<keyword id="KW-0132">Cell division</keyword>
<keyword id="KW-0498">Mitosis</keyword>
<keyword id="KW-1185">Reference proteome</keyword>
<keyword id="KW-0833">Ubl conjugation pathway</keyword>
<keyword id="KW-0853">WD repeat</keyword>
<evidence type="ECO:0000269" key="1">
    <source>
    </source>
</evidence>
<evidence type="ECO:0000269" key="2">
    <source>
    </source>
</evidence>
<evidence type="ECO:0000269" key="3">
    <source>
    </source>
</evidence>
<dbReference type="EMBL" id="AB025243">
    <property type="protein sequence ID" value="BAA82675.1"/>
    <property type="molecule type" value="Genomic_DNA"/>
</dbReference>
<dbReference type="EMBL" id="CU329670">
    <property type="protein sequence ID" value="CAB92101.2"/>
    <property type="molecule type" value="Genomic_DNA"/>
</dbReference>
<dbReference type="PIR" id="T43508">
    <property type="entry name" value="T43508"/>
</dbReference>
<dbReference type="RefSeq" id="XP_001713100.1">
    <property type="nucleotide sequence ID" value="XM_001713048.2"/>
</dbReference>
<dbReference type="SMR" id="O42839"/>
<dbReference type="BioGRID" id="279069">
    <property type="interactions" value="36"/>
</dbReference>
<dbReference type="ComplexPortal" id="CPX-763">
    <property type="entry name" value="Anaphase-promoting complex"/>
</dbReference>
<dbReference type="ComplexPortal" id="CPX-764">
    <property type="entry name" value="Anaphase-promoting complex, slp1 variant"/>
</dbReference>
<dbReference type="ComplexPortal" id="CPX-765">
    <property type="entry name" value="Anaphase-promoting complex, srw1 variant"/>
</dbReference>
<dbReference type="ComplexPortal" id="CPX-766">
    <property type="entry name" value="Anaphase-promoting complex, mfr1 variant"/>
</dbReference>
<dbReference type="FunCoup" id="O42839">
    <property type="interactions" value="423"/>
</dbReference>
<dbReference type="IntAct" id="O42839">
    <property type="interactions" value="12"/>
</dbReference>
<dbReference type="STRING" id="284812.O42839"/>
<dbReference type="PaxDb" id="4896-SPAC19G12.01c.1"/>
<dbReference type="EnsemblFungi" id="SPAC19G12.01c.1">
    <property type="protein sequence ID" value="SPAC19G12.01c.1:pep"/>
    <property type="gene ID" value="SPAC19G12.01c"/>
</dbReference>
<dbReference type="PomBase" id="SPAC19G12.01c">
    <property type="gene designation" value="cut20"/>
</dbReference>
<dbReference type="VEuPathDB" id="FungiDB:SPAC19G12.01c"/>
<dbReference type="eggNOG" id="KOG4640">
    <property type="taxonomic scope" value="Eukaryota"/>
</dbReference>
<dbReference type="HOGENOM" id="CLU_384570_0_0_1"/>
<dbReference type="InParanoid" id="O42839"/>
<dbReference type="PhylomeDB" id="O42839"/>
<dbReference type="Reactome" id="R-SPO-983168">
    <property type="pathway name" value="Antigen processing: Ubiquitination &amp; Proteasome degradation"/>
</dbReference>
<dbReference type="PRO" id="PR:O42839"/>
<dbReference type="Proteomes" id="UP000002485">
    <property type="component" value="Chromosome I"/>
</dbReference>
<dbReference type="GO" id="GO:0005680">
    <property type="term" value="C:anaphase-promoting complex"/>
    <property type="evidence" value="ECO:0000314"/>
    <property type="project" value="PomBase"/>
</dbReference>
<dbReference type="GO" id="GO:0032153">
    <property type="term" value="C:cell division site"/>
    <property type="evidence" value="ECO:0007005"/>
    <property type="project" value="PomBase"/>
</dbReference>
<dbReference type="GO" id="GO:0005829">
    <property type="term" value="C:cytosol"/>
    <property type="evidence" value="ECO:0007005"/>
    <property type="project" value="PomBase"/>
</dbReference>
<dbReference type="GO" id="GO:0044732">
    <property type="term" value="C:mitotic spindle pole body"/>
    <property type="evidence" value="ECO:0007005"/>
    <property type="project" value="PomBase"/>
</dbReference>
<dbReference type="GO" id="GO:0034399">
    <property type="term" value="C:nuclear periphery"/>
    <property type="evidence" value="ECO:0000318"/>
    <property type="project" value="GO_Central"/>
</dbReference>
<dbReference type="GO" id="GO:0005634">
    <property type="term" value="C:nucleus"/>
    <property type="evidence" value="ECO:0007005"/>
    <property type="project" value="PomBase"/>
</dbReference>
<dbReference type="GO" id="GO:0031145">
    <property type="term" value="P:anaphase-promoting complex-dependent catabolic process"/>
    <property type="evidence" value="ECO:0000315"/>
    <property type="project" value="PomBase"/>
</dbReference>
<dbReference type="GO" id="GO:0051301">
    <property type="term" value="P:cell division"/>
    <property type="evidence" value="ECO:0007669"/>
    <property type="project" value="UniProtKB-KW"/>
</dbReference>
<dbReference type="GO" id="GO:0051306">
    <property type="term" value="P:mitotic sister chromatid separation"/>
    <property type="evidence" value="ECO:0000315"/>
    <property type="project" value="PomBase"/>
</dbReference>
<dbReference type="GO" id="GO:0070979">
    <property type="term" value="P:protein K11-linked ubiquitination"/>
    <property type="evidence" value="ECO:0000318"/>
    <property type="project" value="GO_Central"/>
</dbReference>
<dbReference type="Gene3D" id="2.130.10.10">
    <property type="entry name" value="YVTN repeat-like/Quinoprotein amine dehydrogenase"/>
    <property type="match status" value="1"/>
</dbReference>
<dbReference type="InterPro" id="IPR024789">
    <property type="entry name" value="APC4"/>
</dbReference>
<dbReference type="InterPro" id="IPR024977">
    <property type="entry name" value="Apc4-like_WD40_dom"/>
</dbReference>
<dbReference type="InterPro" id="IPR056357">
    <property type="entry name" value="Apc4_C_schizosaccharomycetes"/>
</dbReference>
<dbReference type="InterPro" id="IPR024790">
    <property type="entry name" value="APC4_long_dom"/>
</dbReference>
<dbReference type="InterPro" id="IPR015943">
    <property type="entry name" value="WD40/YVTN_repeat-like_dom_sf"/>
</dbReference>
<dbReference type="InterPro" id="IPR036322">
    <property type="entry name" value="WD40_repeat_dom_sf"/>
</dbReference>
<dbReference type="PANTHER" id="PTHR13260">
    <property type="entry name" value="ANAPHASE PROMOTING COMPLEX SUBUNIT 4 APC4"/>
    <property type="match status" value="1"/>
</dbReference>
<dbReference type="PANTHER" id="PTHR13260:SF0">
    <property type="entry name" value="ANAPHASE-PROMOTING COMPLEX SUBUNIT 4"/>
    <property type="match status" value="1"/>
</dbReference>
<dbReference type="Pfam" id="PF12896">
    <property type="entry name" value="ANAPC4"/>
    <property type="match status" value="1"/>
</dbReference>
<dbReference type="Pfam" id="PF12894">
    <property type="entry name" value="ANAPC4_WD40"/>
    <property type="match status" value="1"/>
</dbReference>
<dbReference type="Pfam" id="PF23407">
    <property type="entry name" value="WD40_Apc4_C_fungal"/>
    <property type="match status" value="1"/>
</dbReference>
<dbReference type="SUPFAM" id="SSF50978">
    <property type="entry name" value="WD40 repeat-like"/>
    <property type="match status" value="1"/>
</dbReference>
<proteinExistence type="evidence at protein level"/>
<name>APC4_SCHPO</name>
<gene>
    <name type="primary">cut20</name>
    <name type="synonym">apc4</name>
    <name type="synonym">lid1</name>
    <name type="ORF">SPAC19G12.01c</name>
    <name type="ORF">SPAPJ698.04c</name>
</gene>
<organism>
    <name type="scientific">Schizosaccharomyces pombe (strain 972 / ATCC 24843)</name>
    <name type="common">Fission yeast</name>
    <dbReference type="NCBI Taxonomy" id="284812"/>
    <lineage>
        <taxon>Eukaryota</taxon>
        <taxon>Fungi</taxon>
        <taxon>Dikarya</taxon>
        <taxon>Ascomycota</taxon>
        <taxon>Taphrinomycotina</taxon>
        <taxon>Schizosaccharomycetes</taxon>
        <taxon>Schizosaccharomycetales</taxon>
        <taxon>Schizosaccharomycetaceae</taxon>
        <taxon>Schizosaccharomyces</taxon>
    </lineage>
</organism>
<protein>
    <recommendedName>
        <fullName>Anaphase-promoting complex subunit 4</fullName>
    </recommendedName>
    <alternativeName>
        <fullName>20S cyclosome/APC complex protein apc4</fullName>
    </alternativeName>
    <alternativeName>
        <fullName>Cell untimely torn protein 20</fullName>
    </alternativeName>
</protein>
<accession>O42839</accession>
<accession>Q9P545</accession>